<accession>Q3K3Q4</accession>
<feature type="chain" id="PRO_0000263980" description="Argininosuccinate synthase">
    <location>
        <begin position="1"/>
        <end position="396"/>
    </location>
</feature>
<feature type="binding site" evidence="1">
    <location>
        <begin position="9"/>
        <end position="17"/>
    </location>
    <ligand>
        <name>ATP</name>
        <dbReference type="ChEBI" id="CHEBI:30616"/>
    </ligand>
</feature>
<feature type="binding site" evidence="1">
    <location>
        <position position="85"/>
    </location>
    <ligand>
        <name>L-citrulline</name>
        <dbReference type="ChEBI" id="CHEBI:57743"/>
    </ligand>
</feature>
<feature type="binding site" evidence="1">
    <location>
        <position position="115"/>
    </location>
    <ligand>
        <name>ATP</name>
        <dbReference type="ChEBI" id="CHEBI:30616"/>
    </ligand>
</feature>
<feature type="binding site" evidence="1">
    <location>
        <position position="117"/>
    </location>
    <ligand>
        <name>L-aspartate</name>
        <dbReference type="ChEBI" id="CHEBI:29991"/>
    </ligand>
</feature>
<feature type="binding site" evidence="1">
    <location>
        <position position="121"/>
    </location>
    <ligand>
        <name>L-aspartate</name>
        <dbReference type="ChEBI" id="CHEBI:29991"/>
    </ligand>
</feature>
<feature type="binding site" evidence="1">
    <location>
        <position position="121"/>
    </location>
    <ligand>
        <name>L-citrulline</name>
        <dbReference type="ChEBI" id="CHEBI:57743"/>
    </ligand>
</feature>
<feature type="binding site" evidence="1">
    <location>
        <position position="122"/>
    </location>
    <ligand>
        <name>L-aspartate</name>
        <dbReference type="ChEBI" id="CHEBI:29991"/>
    </ligand>
</feature>
<feature type="binding site" evidence="1">
    <location>
        <position position="125"/>
    </location>
    <ligand>
        <name>L-citrulline</name>
        <dbReference type="ChEBI" id="CHEBI:57743"/>
    </ligand>
</feature>
<feature type="binding site" evidence="1">
    <location>
        <position position="173"/>
    </location>
    <ligand>
        <name>L-citrulline</name>
        <dbReference type="ChEBI" id="CHEBI:57743"/>
    </ligand>
</feature>
<feature type="binding site" evidence="1">
    <location>
        <position position="258"/>
    </location>
    <ligand>
        <name>L-citrulline</name>
        <dbReference type="ChEBI" id="CHEBI:57743"/>
    </ligand>
</feature>
<feature type="binding site" evidence="1">
    <location>
        <position position="270"/>
    </location>
    <ligand>
        <name>L-citrulline</name>
        <dbReference type="ChEBI" id="CHEBI:57743"/>
    </ligand>
</feature>
<sequence>MGKEKLILAYSGGLDTSVAIAWLKKDYDVIAVCMDVGEGKDLDFIHDKALTIGAIESYILDVKDEFAEHFVLPALQAHAMYEQKYPLVSALSRPIIAQKLVEMAHQTGATTIAHGCTGKGNDQVRFEVAIAALDPELKVIAPVREWKWHREEEITFAKANGVPIPADLDNPYSIDQNLWGRANECGVLENPWNQAPEEAFGITKSPEEAPDCAEYIDITFQNGKPIAINNQEMTLSDLILSLNEIAGKHGIGRIDHVENRLVGIKSREIYECPAAMVLLAAHKEIEDLTLVREVSHFKPILENELSNLIYNALWFSPATKAIIAYVKETQKVVNGTTKVKLYKGSAQVVARHSSNSLYDENLATYTAADSFDQDAAVGFIKLWGLPTQVNAQVNKG</sequence>
<name>ASSY_STRA1</name>
<evidence type="ECO:0000255" key="1">
    <source>
        <dbReference type="HAMAP-Rule" id="MF_00005"/>
    </source>
</evidence>
<dbReference type="EC" id="6.3.4.5" evidence="1"/>
<dbReference type="EMBL" id="CP000114">
    <property type="protein sequence ID" value="ABA45883.1"/>
    <property type="molecule type" value="Genomic_DNA"/>
</dbReference>
<dbReference type="RefSeq" id="WP_000514048.1">
    <property type="nucleotide sequence ID" value="NC_007432.1"/>
</dbReference>
<dbReference type="SMR" id="Q3K3Q4"/>
<dbReference type="KEGG" id="sak:SAK_0176"/>
<dbReference type="HOGENOM" id="CLU_032784_4_2_9"/>
<dbReference type="UniPathway" id="UPA00068">
    <property type="reaction ID" value="UER00113"/>
</dbReference>
<dbReference type="GO" id="GO:0005737">
    <property type="term" value="C:cytoplasm"/>
    <property type="evidence" value="ECO:0007669"/>
    <property type="project" value="UniProtKB-SubCell"/>
</dbReference>
<dbReference type="GO" id="GO:0004055">
    <property type="term" value="F:argininosuccinate synthase activity"/>
    <property type="evidence" value="ECO:0007669"/>
    <property type="project" value="UniProtKB-UniRule"/>
</dbReference>
<dbReference type="GO" id="GO:0005524">
    <property type="term" value="F:ATP binding"/>
    <property type="evidence" value="ECO:0007669"/>
    <property type="project" value="UniProtKB-UniRule"/>
</dbReference>
<dbReference type="GO" id="GO:0000053">
    <property type="term" value="P:argininosuccinate metabolic process"/>
    <property type="evidence" value="ECO:0007669"/>
    <property type="project" value="TreeGrafter"/>
</dbReference>
<dbReference type="GO" id="GO:0006526">
    <property type="term" value="P:L-arginine biosynthetic process"/>
    <property type="evidence" value="ECO:0007669"/>
    <property type="project" value="UniProtKB-UniRule"/>
</dbReference>
<dbReference type="GO" id="GO:0000050">
    <property type="term" value="P:urea cycle"/>
    <property type="evidence" value="ECO:0007669"/>
    <property type="project" value="TreeGrafter"/>
</dbReference>
<dbReference type="CDD" id="cd01999">
    <property type="entry name" value="ASS"/>
    <property type="match status" value="1"/>
</dbReference>
<dbReference type="FunFam" id="1.20.5.470:FF:000002">
    <property type="entry name" value="Argininosuccinate synthase"/>
    <property type="match status" value="1"/>
</dbReference>
<dbReference type="FunFam" id="3.40.50.620:FF:000038">
    <property type="entry name" value="Argininosuccinate synthase"/>
    <property type="match status" value="1"/>
</dbReference>
<dbReference type="FunFam" id="3.90.1260.10:FF:000007">
    <property type="entry name" value="Argininosuccinate synthase"/>
    <property type="match status" value="1"/>
</dbReference>
<dbReference type="Gene3D" id="3.90.1260.10">
    <property type="entry name" value="Argininosuccinate synthetase, chain A, domain 2"/>
    <property type="match status" value="1"/>
</dbReference>
<dbReference type="Gene3D" id="3.40.50.620">
    <property type="entry name" value="HUPs"/>
    <property type="match status" value="1"/>
</dbReference>
<dbReference type="Gene3D" id="1.20.5.470">
    <property type="entry name" value="Single helix bin"/>
    <property type="match status" value="1"/>
</dbReference>
<dbReference type="HAMAP" id="MF_00005">
    <property type="entry name" value="Arg_succ_synth_type1"/>
    <property type="match status" value="1"/>
</dbReference>
<dbReference type="InterPro" id="IPR048268">
    <property type="entry name" value="Arginosuc_syn_C"/>
</dbReference>
<dbReference type="InterPro" id="IPR048267">
    <property type="entry name" value="Arginosuc_syn_N"/>
</dbReference>
<dbReference type="InterPro" id="IPR001518">
    <property type="entry name" value="Arginosuc_synth"/>
</dbReference>
<dbReference type="InterPro" id="IPR018223">
    <property type="entry name" value="Arginosuc_synth_CS"/>
</dbReference>
<dbReference type="InterPro" id="IPR023434">
    <property type="entry name" value="Arginosuc_synth_type_1_subfam"/>
</dbReference>
<dbReference type="InterPro" id="IPR024074">
    <property type="entry name" value="AS_cat/multimer_dom_body"/>
</dbReference>
<dbReference type="InterPro" id="IPR014729">
    <property type="entry name" value="Rossmann-like_a/b/a_fold"/>
</dbReference>
<dbReference type="NCBIfam" id="TIGR00032">
    <property type="entry name" value="argG"/>
    <property type="match status" value="1"/>
</dbReference>
<dbReference type="NCBIfam" id="NF001770">
    <property type="entry name" value="PRK00509.1"/>
    <property type="match status" value="1"/>
</dbReference>
<dbReference type="PANTHER" id="PTHR11587">
    <property type="entry name" value="ARGININOSUCCINATE SYNTHASE"/>
    <property type="match status" value="1"/>
</dbReference>
<dbReference type="PANTHER" id="PTHR11587:SF2">
    <property type="entry name" value="ARGININOSUCCINATE SYNTHASE"/>
    <property type="match status" value="1"/>
</dbReference>
<dbReference type="Pfam" id="PF20979">
    <property type="entry name" value="Arginosuc_syn_C"/>
    <property type="match status" value="1"/>
</dbReference>
<dbReference type="Pfam" id="PF00764">
    <property type="entry name" value="Arginosuc_synth"/>
    <property type="match status" value="1"/>
</dbReference>
<dbReference type="SUPFAM" id="SSF52402">
    <property type="entry name" value="Adenine nucleotide alpha hydrolases-like"/>
    <property type="match status" value="1"/>
</dbReference>
<dbReference type="SUPFAM" id="SSF69864">
    <property type="entry name" value="Argininosuccinate synthetase, C-terminal domain"/>
    <property type="match status" value="1"/>
</dbReference>
<dbReference type="PROSITE" id="PS00564">
    <property type="entry name" value="ARGININOSUCCIN_SYN_1"/>
    <property type="match status" value="1"/>
</dbReference>
<dbReference type="PROSITE" id="PS00565">
    <property type="entry name" value="ARGININOSUCCIN_SYN_2"/>
    <property type="match status" value="1"/>
</dbReference>
<comment type="catalytic activity">
    <reaction evidence="1">
        <text>L-citrulline + L-aspartate + ATP = 2-(N(omega)-L-arginino)succinate + AMP + diphosphate + H(+)</text>
        <dbReference type="Rhea" id="RHEA:10932"/>
        <dbReference type="ChEBI" id="CHEBI:15378"/>
        <dbReference type="ChEBI" id="CHEBI:29991"/>
        <dbReference type="ChEBI" id="CHEBI:30616"/>
        <dbReference type="ChEBI" id="CHEBI:33019"/>
        <dbReference type="ChEBI" id="CHEBI:57472"/>
        <dbReference type="ChEBI" id="CHEBI:57743"/>
        <dbReference type="ChEBI" id="CHEBI:456215"/>
        <dbReference type="EC" id="6.3.4.5"/>
    </reaction>
</comment>
<comment type="pathway">
    <text evidence="1">Amino-acid biosynthesis; L-arginine biosynthesis; L-arginine from L-ornithine and carbamoyl phosphate: step 2/3.</text>
</comment>
<comment type="subunit">
    <text evidence="1">Homotetramer.</text>
</comment>
<comment type="subcellular location">
    <subcellularLocation>
        <location evidence="1">Cytoplasm</location>
    </subcellularLocation>
</comment>
<comment type="similarity">
    <text evidence="1">Belongs to the argininosuccinate synthase family. Type 1 subfamily.</text>
</comment>
<gene>
    <name evidence="1" type="primary">argG</name>
    <name type="ordered locus">SAK_0176</name>
</gene>
<reference key="1">
    <citation type="journal article" date="2005" name="Proc. Natl. Acad. Sci. U.S.A.">
        <title>Genome analysis of multiple pathogenic isolates of Streptococcus agalactiae: implications for the microbial 'pan-genome'.</title>
        <authorList>
            <person name="Tettelin H."/>
            <person name="Masignani V."/>
            <person name="Cieslewicz M.J."/>
            <person name="Donati C."/>
            <person name="Medini D."/>
            <person name="Ward N.L."/>
            <person name="Angiuoli S.V."/>
            <person name="Crabtree J."/>
            <person name="Jones A.L."/>
            <person name="Durkin A.S."/>
            <person name="DeBoy R.T."/>
            <person name="Davidsen T.M."/>
            <person name="Mora M."/>
            <person name="Scarselli M."/>
            <person name="Margarit y Ros I."/>
            <person name="Peterson J.D."/>
            <person name="Hauser C.R."/>
            <person name="Sundaram J.P."/>
            <person name="Nelson W.C."/>
            <person name="Madupu R."/>
            <person name="Brinkac L.M."/>
            <person name="Dodson R.J."/>
            <person name="Rosovitz M.J."/>
            <person name="Sullivan S.A."/>
            <person name="Daugherty S.C."/>
            <person name="Haft D.H."/>
            <person name="Selengut J."/>
            <person name="Gwinn M.L."/>
            <person name="Zhou L."/>
            <person name="Zafar N."/>
            <person name="Khouri H."/>
            <person name="Radune D."/>
            <person name="Dimitrov G."/>
            <person name="Watkins K."/>
            <person name="O'Connor K.J."/>
            <person name="Smith S."/>
            <person name="Utterback T.R."/>
            <person name="White O."/>
            <person name="Rubens C.E."/>
            <person name="Grandi G."/>
            <person name="Madoff L.C."/>
            <person name="Kasper D.L."/>
            <person name="Telford J.L."/>
            <person name="Wessels M.R."/>
            <person name="Rappuoli R."/>
            <person name="Fraser C.M."/>
        </authorList>
    </citation>
    <scope>NUCLEOTIDE SEQUENCE [LARGE SCALE GENOMIC DNA]</scope>
    <source>
        <strain>ATCC 27591 / A909 / CDC SS700</strain>
    </source>
</reference>
<keyword id="KW-0028">Amino-acid biosynthesis</keyword>
<keyword id="KW-0055">Arginine biosynthesis</keyword>
<keyword id="KW-0067">ATP-binding</keyword>
<keyword id="KW-0963">Cytoplasm</keyword>
<keyword id="KW-0436">Ligase</keyword>
<keyword id="KW-0547">Nucleotide-binding</keyword>
<proteinExistence type="inferred from homology"/>
<organism>
    <name type="scientific">Streptococcus agalactiae serotype Ia (strain ATCC 27591 / A909 / CDC SS700)</name>
    <dbReference type="NCBI Taxonomy" id="205921"/>
    <lineage>
        <taxon>Bacteria</taxon>
        <taxon>Bacillati</taxon>
        <taxon>Bacillota</taxon>
        <taxon>Bacilli</taxon>
        <taxon>Lactobacillales</taxon>
        <taxon>Streptococcaceae</taxon>
        <taxon>Streptococcus</taxon>
    </lineage>
</organism>
<protein>
    <recommendedName>
        <fullName evidence="1">Argininosuccinate synthase</fullName>
        <ecNumber evidence="1">6.3.4.5</ecNumber>
    </recommendedName>
    <alternativeName>
        <fullName evidence="1">Citrulline--aspartate ligase</fullName>
    </alternativeName>
</protein>